<sequence length="318" mass="31629">MEKPSSGANHVAKATVSLSIASVLILGAVLTMLSIQLDEAHERLQNRMGSFKFVARNIWHDIVLVKSNGRIKRQYGGYGSDSAQSDNQQCTSCVQLRCPPGPIGPPGVSGEPGMDGANGRPGKPGLDGLDVPLDPEPAFPCVICPAGPPGTRGPQGEVGRPGQTGESGHPGLPGRPGKPGRVGDAGPQGEPGEQGEPGIKGPPGDDSIGGTGIKGPPGPPGPRGPKGPPGSNGLPSQNSGPPGPIGEMGPPGPPGPRGEPGPPGPFGPPGDSGEPGGHCPSSCGVQEIVAPSVSELDTNDEPEKPARGGYSGGGYGKK</sequence>
<organism>
    <name type="scientific">Caenorhabditis elegans</name>
    <dbReference type="NCBI Taxonomy" id="6239"/>
    <lineage>
        <taxon>Eukaryota</taxon>
        <taxon>Metazoa</taxon>
        <taxon>Ecdysozoa</taxon>
        <taxon>Nematoda</taxon>
        <taxon>Chromadorea</taxon>
        <taxon>Rhabditida</taxon>
        <taxon>Rhabditina</taxon>
        <taxon>Rhabditomorpha</taxon>
        <taxon>Rhabditoidea</taxon>
        <taxon>Rhabditidae</taxon>
        <taxon>Peloderinae</taxon>
        <taxon>Caenorhabditis</taxon>
    </lineage>
</organism>
<reference key="1">
    <citation type="journal article" date="1992" name="EMBO J.">
        <title>Molecular analysis of mutations in the Caenorhabditis elegans collagen gene dpy-7.</title>
        <authorList>
            <person name="Johnstone I.L."/>
            <person name="Shafi Y."/>
            <person name="Barry J.D."/>
        </authorList>
    </citation>
    <scope>NUCLEOTIDE SEQUENCE [GENOMIC DNA]</scope>
    <scope>MUTAGENESIS OF GLY-101; GLY-156; GLY-189 AND GLY-201</scope>
</reference>
<reference key="2">
    <citation type="journal article" date="1998" name="Science">
        <title>Genome sequence of the nematode C. elegans: a platform for investigating biology.</title>
        <authorList>
            <consortium name="The C. elegans sequencing consortium"/>
        </authorList>
    </citation>
    <scope>NUCLEOTIDE SEQUENCE [LARGE SCALE GENOMIC DNA]</scope>
    <source>
        <strain>Bristol N2</strain>
    </source>
</reference>
<name>DPY7_CAEEL</name>
<dbReference type="EMBL" id="X64435">
    <property type="protein sequence ID" value="CAA45773.1"/>
    <property type="molecule type" value="Genomic_DNA"/>
</dbReference>
<dbReference type="EMBL" id="FO081392">
    <property type="protein sequence ID" value="CCD71295.1"/>
    <property type="molecule type" value="Genomic_DNA"/>
</dbReference>
<dbReference type="PIR" id="S27977">
    <property type="entry name" value="S27977"/>
</dbReference>
<dbReference type="RefSeq" id="NP_509274.1">
    <property type="nucleotide sequence ID" value="NM_076873.7"/>
</dbReference>
<dbReference type="BioGRID" id="45937">
    <property type="interactions" value="5"/>
</dbReference>
<dbReference type="FunCoup" id="P34688">
    <property type="interactions" value="94"/>
</dbReference>
<dbReference type="IntAct" id="P34688">
    <property type="interactions" value="1"/>
</dbReference>
<dbReference type="STRING" id="6239.F46C8.6.1"/>
<dbReference type="PaxDb" id="6239-F46C8.6"/>
<dbReference type="PeptideAtlas" id="P34688"/>
<dbReference type="EnsemblMetazoa" id="F46C8.6.1">
    <property type="protein sequence ID" value="F46C8.6.1"/>
    <property type="gene ID" value="WBGene00001069"/>
</dbReference>
<dbReference type="GeneID" id="181013"/>
<dbReference type="KEGG" id="cel:CELE_F46C8.6"/>
<dbReference type="UCSC" id="F46C8.6.1">
    <property type="organism name" value="c. elegans"/>
</dbReference>
<dbReference type="AGR" id="WB:WBGene00001069"/>
<dbReference type="CTD" id="181013"/>
<dbReference type="WormBase" id="F46C8.6">
    <property type="protein sequence ID" value="CE04580"/>
    <property type="gene ID" value="WBGene00001069"/>
    <property type="gene designation" value="dpy-7"/>
</dbReference>
<dbReference type="eggNOG" id="KOG3544">
    <property type="taxonomic scope" value="Eukaryota"/>
</dbReference>
<dbReference type="GeneTree" id="ENSGT00970000196241"/>
<dbReference type="HOGENOM" id="CLU_001074_4_0_1"/>
<dbReference type="InParanoid" id="P34688"/>
<dbReference type="OMA" id="NQQCTSC"/>
<dbReference type="OrthoDB" id="5985978at2759"/>
<dbReference type="PhylomeDB" id="P34688"/>
<dbReference type="PRO" id="PR:P34688"/>
<dbReference type="Proteomes" id="UP000001940">
    <property type="component" value="Chromosome X"/>
</dbReference>
<dbReference type="Bgee" id="WBGene00001069">
    <property type="expression patterns" value="Expressed in pharyngeal muscle cell (C elegans) and 3 other cell types or tissues"/>
</dbReference>
<dbReference type="GO" id="GO:0060108">
    <property type="term" value="C:annular furrow extracellular matrix"/>
    <property type="evidence" value="ECO:0000314"/>
    <property type="project" value="WormBase"/>
</dbReference>
<dbReference type="GO" id="GO:0005581">
    <property type="term" value="C:collagen trimer"/>
    <property type="evidence" value="ECO:0007669"/>
    <property type="project" value="UniProtKB-KW"/>
</dbReference>
<dbReference type="GO" id="GO:0060102">
    <property type="term" value="C:cuticular extracellular matrix"/>
    <property type="evidence" value="ECO:0000314"/>
    <property type="project" value="WormBase"/>
</dbReference>
<dbReference type="GO" id="GO:0042329">
    <property type="term" value="F:structural constituent of collagen and cuticulin-based cuticle"/>
    <property type="evidence" value="ECO:0000314"/>
    <property type="project" value="WormBase"/>
</dbReference>
<dbReference type="GO" id="GO:0042338">
    <property type="term" value="P:cuticle development involved in collagen and cuticulin-based cuticle molting cycle"/>
    <property type="evidence" value="ECO:0000315"/>
    <property type="project" value="WormBase"/>
</dbReference>
<dbReference type="GO" id="GO:0040032">
    <property type="term" value="P:post-embryonic body morphogenesis"/>
    <property type="evidence" value="ECO:0000315"/>
    <property type="project" value="WormBase"/>
</dbReference>
<dbReference type="InterPro" id="IPR002486">
    <property type="entry name" value="Col_cuticle_N"/>
</dbReference>
<dbReference type="InterPro" id="IPR008160">
    <property type="entry name" value="Collagen"/>
</dbReference>
<dbReference type="PANTHER" id="PTHR24637">
    <property type="entry name" value="COLLAGEN"/>
    <property type="match status" value="1"/>
</dbReference>
<dbReference type="PANTHER" id="PTHR24637:SF374">
    <property type="entry name" value="CUTICLE COLLAGEN DPY-7"/>
    <property type="match status" value="1"/>
</dbReference>
<dbReference type="Pfam" id="PF01484">
    <property type="entry name" value="Col_cuticle_N"/>
    <property type="match status" value="1"/>
</dbReference>
<dbReference type="Pfam" id="PF01391">
    <property type="entry name" value="Collagen"/>
    <property type="match status" value="2"/>
</dbReference>
<dbReference type="SMART" id="SM01088">
    <property type="entry name" value="Col_cuticle_N"/>
    <property type="match status" value="1"/>
</dbReference>
<feature type="signal peptide" evidence="1">
    <location>
        <begin position="1"/>
        <end status="unknown"/>
    </location>
</feature>
<feature type="chain" id="PRO_0000006429" description="Cuticle collagen dpy-7">
    <location>
        <begin status="unknown"/>
        <end position="318"/>
    </location>
</feature>
<feature type="region of interest" description="Disordered" evidence="2">
    <location>
        <begin position="101"/>
        <end position="318"/>
    </location>
</feature>
<feature type="region of interest" description="Triple-helical region">
    <location>
        <begin position="101"/>
        <end position="130"/>
    </location>
</feature>
<feature type="region of interest" description="Triple-helical region">
    <location>
        <begin position="147"/>
        <end position="206"/>
    </location>
</feature>
<feature type="region of interest" description="Triple-helical region">
    <location>
        <begin position="209"/>
        <end position="235"/>
    </location>
</feature>
<feature type="region of interest" description="Triple-helical region">
    <location>
        <begin position="240"/>
        <end position="278"/>
    </location>
</feature>
<feature type="compositionally biased region" description="Low complexity" evidence="2">
    <location>
        <begin position="187"/>
        <end position="204"/>
    </location>
</feature>
<feature type="compositionally biased region" description="Pro residues" evidence="2">
    <location>
        <begin position="216"/>
        <end position="228"/>
    </location>
</feature>
<feature type="compositionally biased region" description="Pro residues" evidence="2">
    <location>
        <begin position="250"/>
        <end position="268"/>
    </location>
</feature>
<feature type="compositionally biased region" description="Gly residues" evidence="2">
    <location>
        <begin position="309"/>
        <end position="318"/>
    </location>
</feature>
<feature type="mutagenesis site" description="In dpy7(SC27)." evidence="3">
    <original>G</original>
    <variation>R</variation>
    <location>
        <position position="101"/>
    </location>
</feature>
<feature type="mutagenesis site" description="In dpy7(E88)." evidence="3">
    <original>G</original>
    <variation>R</variation>
    <location>
        <position position="156"/>
    </location>
</feature>
<feature type="mutagenesis site" description="In dpy7(E1234)." evidence="3">
    <original>G</original>
    <variation>Y</variation>
    <location>
        <position position="189"/>
    </location>
</feature>
<feature type="mutagenesis site" description="In dpy7(M38)." evidence="3">
    <original>G</original>
    <variation>R</variation>
    <location>
        <position position="201"/>
    </location>
</feature>
<keyword id="KW-0176">Collagen</keyword>
<keyword id="KW-0193">Cuticle</keyword>
<keyword id="KW-1015">Disulfide bond</keyword>
<keyword id="KW-1185">Reference proteome</keyword>
<keyword id="KW-0677">Repeat</keyword>
<keyword id="KW-0732">Signal</keyword>
<evidence type="ECO:0000255" key="1"/>
<evidence type="ECO:0000256" key="2">
    <source>
        <dbReference type="SAM" id="MobiDB-lite"/>
    </source>
</evidence>
<evidence type="ECO:0000269" key="3">
    <source>
    </source>
</evidence>
<evidence type="ECO:0000305" key="4"/>
<comment type="function">
    <text>Nematode cuticles are composed largely of collagen-like proteins. The cuticle functions both as an exoskeleton and as a barrier to protect the worm from its environment. Mutations in dpy-7 affects the body shape.</text>
</comment>
<comment type="subunit">
    <text>Collagen polypeptide chains are complexed within the cuticle by disulfide bonds and other types of covalent cross-links.</text>
</comment>
<comment type="similarity">
    <text evidence="4">Belongs to the cuticular collagen family.</text>
</comment>
<gene>
    <name type="primary">dpy-7</name>
    <name type="ORF">F46C8.6</name>
</gene>
<accession>P34688</accession>
<protein>
    <recommendedName>
        <fullName>Cuticle collagen dpy-7</fullName>
    </recommendedName>
    <alternativeName>
        <fullName>Protein dumpy-7</fullName>
    </alternativeName>
</protein>
<proteinExistence type="evidence at protein level"/>